<proteinExistence type="inferred from homology"/>
<protein>
    <recommendedName>
        <fullName>NADH-ubiquinone oxidoreductase chain 4L</fullName>
        <ecNumber>7.1.1.2</ecNumber>
    </recommendedName>
    <alternativeName>
        <fullName>NADH dehydrogenase subunit 4L</fullName>
    </alternativeName>
</protein>
<reference key="1">
    <citation type="journal article" date="2000" name="Mol. Biol. Evol.">
        <title>Rapid and parallel chromosomal number reductions in muntjac deer inferred from mitochondrial DNA phylogeny.</title>
        <authorList>
            <person name="Wang W."/>
            <person name="Lan H."/>
        </authorList>
    </citation>
    <scope>NUCLEOTIDE SEQUENCE [GENOMIC DNA]</scope>
</reference>
<comment type="function">
    <text evidence="1">Core subunit of the mitochondrial membrane respiratory chain NADH dehydrogenase (Complex I) which catalyzes electron transfer from NADH through the respiratory chain, using ubiquinone as an electron acceptor. Part of the enzyme membrane arm which is embedded in the lipid bilayer and involved in proton translocation.</text>
</comment>
<comment type="catalytic activity">
    <reaction evidence="1">
        <text>a ubiquinone + NADH + 5 H(+)(in) = a ubiquinol + NAD(+) + 4 H(+)(out)</text>
        <dbReference type="Rhea" id="RHEA:29091"/>
        <dbReference type="Rhea" id="RHEA-COMP:9565"/>
        <dbReference type="Rhea" id="RHEA-COMP:9566"/>
        <dbReference type="ChEBI" id="CHEBI:15378"/>
        <dbReference type="ChEBI" id="CHEBI:16389"/>
        <dbReference type="ChEBI" id="CHEBI:17976"/>
        <dbReference type="ChEBI" id="CHEBI:57540"/>
        <dbReference type="ChEBI" id="CHEBI:57945"/>
        <dbReference type="EC" id="7.1.1.2"/>
    </reaction>
    <physiologicalReaction direction="left-to-right" evidence="1">
        <dbReference type="Rhea" id="RHEA:29092"/>
    </physiologicalReaction>
</comment>
<comment type="subunit">
    <text evidence="2">Core subunit of respiratory chain NADH dehydrogenase (Complex I) which is composed of 45 different subunits.</text>
</comment>
<comment type="subcellular location">
    <subcellularLocation>
        <location evidence="2">Mitochondrion inner membrane</location>
        <topology evidence="3">Multi-pass membrane protein</topology>
    </subcellularLocation>
</comment>
<comment type="similarity">
    <text evidence="4">Belongs to the complex I subunit 4L family.</text>
</comment>
<keyword id="KW-0249">Electron transport</keyword>
<keyword id="KW-0472">Membrane</keyword>
<keyword id="KW-0496">Mitochondrion</keyword>
<keyword id="KW-0999">Mitochondrion inner membrane</keyword>
<keyword id="KW-0520">NAD</keyword>
<keyword id="KW-0679">Respiratory chain</keyword>
<keyword id="KW-1278">Translocase</keyword>
<keyword id="KW-0812">Transmembrane</keyword>
<keyword id="KW-1133">Transmembrane helix</keyword>
<keyword id="KW-0813">Transport</keyword>
<keyword id="KW-0830">Ubiquinone</keyword>
<organism>
    <name type="scientific">Elaphodus cephalophus</name>
    <name type="common">Tufted deer</name>
    <dbReference type="NCBI Taxonomy" id="109298"/>
    <lineage>
        <taxon>Eukaryota</taxon>
        <taxon>Metazoa</taxon>
        <taxon>Chordata</taxon>
        <taxon>Craniata</taxon>
        <taxon>Vertebrata</taxon>
        <taxon>Euteleostomi</taxon>
        <taxon>Mammalia</taxon>
        <taxon>Eutheria</taxon>
        <taxon>Laurasiatheria</taxon>
        <taxon>Artiodactyla</taxon>
        <taxon>Ruminantia</taxon>
        <taxon>Pecora</taxon>
        <taxon>Cervidae</taxon>
        <taxon>Muntiacinae</taxon>
        <taxon>Elaphodus</taxon>
    </lineage>
</organism>
<name>NU4LM_ELACE</name>
<sequence length="98" mass="10765">MSLVYMNIMTAFTVSLTGLLMYRSHLMSSLLCLEGMMLALFVMATLTILNSHFTLASMMPIILLVFAACEAALGLSLLVMVSNTYGTDYVQNLNLLQC</sequence>
<geneLocation type="mitochondrion"/>
<dbReference type="EC" id="7.1.1.2"/>
<dbReference type="EMBL" id="AF190684">
    <property type="protein sequence ID" value="AAG59692.1"/>
    <property type="molecule type" value="Genomic_DNA"/>
</dbReference>
<dbReference type="RefSeq" id="YP_961403.1">
    <property type="nucleotide sequence ID" value="NC_008749.1"/>
</dbReference>
<dbReference type="SMR" id="Q9B987"/>
<dbReference type="GeneID" id="4657604"/>
<dbReference type="CTD" id="4539"/>
<dbReference type="GO" id="GO:0005743">
    <property type="term" value="C:mitochondrial inner membrane"/>
    <property type="evidence" value="ECO:0000250"/>
    <property type="project" value="UniProtKB"/>
</dbReference>
<dbReference type="GO" id="GO:0045271">
    <property type="term" value="C:respiratory chain complex I"/>
    <property type="evidence" value="ECO:0000250"/>
    <property type="project" value="UniProtKB"/>
</dbReference>
<dbReference type="GO" id="GO:0008137">
    <property type="term" value="F:NADH dehydrogenase (ubiquinone) activity"/>
    <property type="evidence" value="ECO:0000250"/>
    <property type="project" value="UniProtKB"/>
</dbReference>
<dbReference type="GO" id="GO:0042773">
    <property type="term" value="P:ATP synthesis coupled electron transport"/>
    <property type="evidence" value="ECO:0007669"/>
    <property type="project" value="InterPro"/>
</dbReference>
<dbReference type="FunFam" id="1.10.287.3510:FF:000002">
    <property type="entry name" value="NADH-ubiquinone oxidoreductase chain 4L"/>
    <property type="match status" value="1"/>
</dbReference>
<dbReference type="Gene3D" id="1.10.287.3510">
    <property type="match status" value="1"/>
</dbReference>
<dbReference type="InterPro" id="IPR001133">
    <property type="entry name" value="NADH_UbQ_OxRdtase_chain4L/K"/>
</dbReference>
<dbReference type="InterPro" id="IPR039428">
    <property type="entry name" value="NUOK/Mnh_C1-like"/>
</dbReference>
<dbReference type="PANTHER" id="PTHR11434:SF0">
    <property type="entry name" value="NADH-UBIQUINONE OXIDOREDUCTASE CHAIN 4L"/>
    <property type="match status" value="1"/>
</dbReference>
<dbReference type="PANTHER" id="PTHR11434">
    <property type="entry name" value="NADH-UBIQUINONE OXIDOREDUCTASE SUBUNIT ND4L"/>
    <property type="match status" value="1"/>
</dbReference>
<dbReference type="Pfam" id="PF00420">
    <property type="entry name" value="Oxidored_q2"/>
    <property type="match status" value="1"/>
</dbReference>
<evidence type="ECO:0000250" key="1">
    <source>
        <dbReference type="UniProtKB" id="P03901"/>
    </source>
</evidence>
<evidence type="ECO:0000250" key="2">
    <source>
        <dbReference type="UniProtKB" id="P03902"/>
    </source>
</evidence>
<evidence type="ECO:0000255" key="3"/>
<evidence type="ECO:0000305" key="4"/>
<accession>Q9B987</accession>
<gene>
    <name type="primary">MT-ND4L</name>
    <name type="synonym">MTND4L</name>
    <name type="synonym">NADH4L</name>
    <name type="synonym">ND4L</name>
</gene>
<feature type="chain" id="PRO_0000118420" description="NADH-ubiquinone oxidoreductase chain 4L">
    <location>
        <begin position="1"/>
        <end position="98"/>
    </location>
</feature>
<feature type="transmembrane region" description="Helical" evidence="3">
    <location>
        <begin position="1"/>
        <end position="21"/>
    </location>
</feature>
<feature type="transmembrane region" description="Helical" evidence="3">
    <location>
        <begin position="29"/>
        <end position="49"/>
    </location>
</feature>
<feature type="transmembrane region" description="Helical" evidence="3">
    <location>
        <begin position="61"/>
        <end position="81"/>
    </location>
</feature>